<proteinExistence type="inferred from homology"/>
<feature type="chain" id="PRO_1000053052" description="Large ribosomal subunit protein uL18">
    <location>
        <begin position="1"/>
        <end position="120"/>
    </location>
</feature>
<reference key="1">
    <citation type="submission" date="2006-08" db="EMBL/GenBank/DDBJ databases">
        <title>Complete sequence of Maricaulis maris MCS10.</title>
        <authorList>
            <consortium name="US DOE Joint Genome Institute"/>
            <person name="Copeland A."/>
            <person name="Lucas S."/>
            <person name="Lapidus A."/>
            <person name="Barry K."/>
            <person name="Detter J.C."/>
            <person name="Glavina del Rio T."/>
            <person name="Hammon N."/>
            <person name="Israni S."/>
            <person name="Dalin E."/>
            <person name="Tice H."/>
            <person name="Pitluck S."/>
            <person name="Saunders E."/>
            <person name="Brettin T."/>
            <person name="Bruce D."/>
            <person name="Han C."/>
            <person name="Tapia R."/>
            <person name="Gilna P."/>
            <person name="Schmutz J."/>
            <person name="Larimer F."/>
            <person name="Land M."/>
            <person name="Hauser L."/>
            <person name="Kyrpides N."/>
            <person name="Mikhailova N."/>
            <person name="Viollier P."/>
            <person name="Stephens C."/>
            <person name="Richardson P."/>
        </authorList>
    </citation>
    <scope>NUCLEOTIDE SEQUENCE [LARGE SCALE GENOMIC DNA]</scope>
    <source>
        <strain>MCS10</strain>
    </source>
</reference>
<evidence type="ECO:0000255" key="1">
    <source>
        <dbReference type="HAMAP-Rule" id="MF_01337"/>
    </source>
</evidence>
<evidence type="ECO:0000305" key="2"/>
<accession>Q0ANR6</accession>
<sequence length="120" mass="13356">MKTQREKSVRRAQRNRIRLRKFANGRPRLSVYRSSKNIYAQIIDDASGKTVVAASSLEEAAQKEHGKGWDTKAAELVGKLIAERAVKEGVKDVVFDRGGYIFHGRVKALAEAAREGGLNF</sequence>
<organism>
    <name type="scientific">Maricaulis maris (strain MCS10)</name>
    <name type="common">Caulobacter maris</name>
    <dbReference type="NCBI Taxonomy" id="394221"/>
    <lineage>
        <taxon>Bacteria</taxon>
        <taxon>Pseudomonadati</taxon>
        <taxon>Pseudomonadota</taxon>
        <taxon>Alphaproteobacteria</taxon>
        <taxon>Maricaulales</taxon>
        <taxon>Maricaulaceae</taxon>
        <taxon>Maricaulis</taxon>
    </lineage>
</organism>
<gene>
    <name evidence="1" type="primary">rplR</name>
    <name type="ordered locus">Mmar10_1779</name>
</gene>
<dbReference type="EMBL" id="CP000449">
    <property type="protein sequence ID" value="ABI66071.1"/>
    <property type="molecule type" value="Genomic_DNA"/>
</dbReference>
<dbReference type="RefSeq" id="WP_011643717.1">
    <property type="nucleotide sequence ID" value="NC_008347.1"/>
</dbReference>
<dbReference type="SMR" id="Q0ANR6"/>
<dbReference type="STRING" id="394221.Mmar10_1779"/>
<dbReference type="KEGG" id="mmr:Mmar10_1779"/>
<dbReference type="eggNOG" id="COG0256">
    <property type="taxonomic scope" value="Bacteria"/>
</dbReference>
<dbReference type="HOGENOM" id="CLU_098841_0_1_5"/>
<dbReference type="OrthoDB" id="9810939at2"/>
<dbReference type="Proteomes" id="UP000001964">
    <property type="component" value="Chromosome"/>
</dbReference>
<dbReference type="GO" id="GO:0022625">
    <property type="term" value="C:cytosolic large ribosomal subunit"/>
    <property type="evidence" value="ECO:0007669"/>
    <property type="project" value="TreeGrafter"/>
</dbReference>
<dbReference type="GO" id="GO:0008097">
    <property type="term" value="F:5S rRNA binding"/>
    <property type="evidence" value="ECO:0007669"/>
    <property type="project" value="TreeGrafter"/>
</dbReference>
<dbReference type="GO" id="GO:0003735">
    <property type="term" value="F:structural constituent of ribosome"/>
    <property type="evidence" value="ECO:0007669"/>
    <property type="project" value="InterPro"/>
</dbReference>
<dbReference type="GO" id="GO:0006412">
    <property type="term" value="P:translation"/>
    <property type="evidence" value="ECO:0007669"/>
    <property type="project" value="UniProtKB-UniRule"/>
</dbReference>
<dbReference type="CDD" id="cd00432">
    <property type="entry name" value="Ribosomal_L18_L5e"/>
    <property type="match status" value="1"/>
</dbReference>
<dbReference type="FunFam" id="3.30.420.100:FF:000001">
    <property type="entry name" value="50S ribosomal protein L18"/>
    <property type="match status" value="1"/>
</dbReference>
<dbReference type="Gene3D" id="3.30.420.100">
    <property type="match status" value="1"/>
</dbReference>
<dbReference type="HAMAP" id="MF_01337_B">
    <property type="entry name" value="Ribosomal_uL18_B"/>
    <property type="match status" value="1"/>
</dbReference>
<dbReference type="InterPro" id="IPR004389">
    <property type="entry name" value="Ribosomal_uL18_bac-type"/>
</dbReference>
<dbReference type="InterPro" id="IPR005484">
    <property type="entry name" value="Ribosomal_uL18_bac/euk"/>
</dbReference>
<dbReference type="NCBIfam" id="TIGR00060">
    <property type="entry name" value="L18_bact"/>
    <property type="match status" value="1"/>
</dbReference>
<dbReference type="PANTHER" id="PTHR12899">
    <property type="entry name" value="39S RIBOSOMAL PROTEIN L18, MITOCHONDRIAL"/>
    <property type="match status" value="1"/>
</dbReference>
<dbReference type="PANTHER" id="PTHR12899:SF3">
    <property type="entry name" value="LARGE RIBOSOMAL SUBUNIT PROTEIN UL18M"/>
    <property type="match status" value="1"/>
</dbReference>
<dbReference type="Pfam" id="PF00861">
    <property type="entry name" value="Ribosomal_L18p"/>
    <property type="match status" value="1"/>
</dbReference>
<dbReference type="SUPFAM" id="SSF53137">
    <property type="entry name" value="Translational machinery components"/>
    <property type="match status" value="1"/>
</dbReference>
<comment type="function">
    <text evidence="1">This is one of the proteins that bind and probably mediate the attachment of the 5S RNA into the large ribosomal subunit, where it forms part of the central protuberance.</text>
</comment>
<comment type="subunit">
    <text evidence="1">Part of the 50S ribosomal subunit; part of the 5S rRNA/L5/L18/L25 subcomplex. Contacts the 5S and 23S rRNAs.</text>
</comment>
<comment type="similarity">
    <text evidence="1">Belongs to the universal ribosomal protein uL18 family.</text>
</comment>
<keyword id="KW-1185">Reference proteome</keyword>
<keyword id="KW-0687">Ribonucleoprotein</keyword>
<keyword id="KW-0689">Ribosomal protein</keyword>
<keyword id="KW-0694">RNA-binding</keyword>
<keyword id="KW-0699">rRNA-binding</keyword>
<name>RL18_MARMM</name>
<protein>
    <recommendedName>
        <fullName evidence="1">Large ribosomal subunit protein uL18</fullName>
    </recommendedName>
    <alternativeName>
        <fullName evidence="2">50S ribosomal protein L18</fullName>
    </alternativeName>
</protein>